<name>RL17_RHILO</name>
<sequence>MRHGFKGRRFARSISHRKSMFANLAVSLLEHEQIVTTLPKAKDLRPIVEKLVTLGKRGDLHARRQVIAQIGNEGVVKRLFDTIAPRYANRNGGYLRIMKAGFRHGDNAAMAVIEFVDRDTSAKGAGDRARLEAEGTDAEAAAA</sequence>
<protein>
    <recommendedName>
        <fullName evidence="1">Large ribosomal subunit protein bL17</fullName>
    </recommendedName>
    <alternativeName>
        <fullName evidence="3">50S ribosomal protein L17</fullName>
    </alternativeName>
</protein>
<keyword id="KW-0687">Ribonucleoprotein</keyword>
<keyword id="KW-0689">Ribosomal protein</keyword>
<comment type="subunit">
    <text evidence="1">Part of the 50S ribosomal subunit. Contacts protein L32.</text>
</comment>
<comment type="similarity">
    <text evidence="1">Belongs to the bacterial ribosomal protein bL17 family.</text>
</comment>
<organism>
    <name type="scientific">Mesorhizobium japonicum (strain LMG 29417 / CECT 9101 / MAFF 303099)</name>
    <name type="common">Mesorhizobium loti (strain MAFF 303099)</name>
    <dbReference type="NCBI Taxonomy" id="266835"/>
    <lineage>
        <taxon>Bacteria</taxon>
        <taxon>Pseudomonadati</taxon>
        <taxon>Pseudomonadota</taxon>
        <taxon>Alphaproteobacteria</taxon>
        <taxon>Hyphomicrobiales</taxon>
        <taxon>Phyllobacteriaceae</taxon>
        <taxon>Mesorhizobium</taxon>
    </lineage>
</organism>
<feature type="chain" id="PRO_0000267925" description="Large ribosomal subunit protein bL17">
    <location>
        <begin position="1"/>
        <end position="143"/>
    </location>
</feature>
<feature type="region of interest" description="Disordered" evidence="2">
    <location>
        <begin position="124"/>
        <end position="143"/>
    </location>
</feature>
<feature type="compositionally biased region" description="Basic and acidic residues" evidence="2">
    <location>
        <begin position="124"/>
        <end position="133"/>
    </location>
</feature>
<evidence type="ECO:0000255" key="1">
    <source>
        <dbReference type="HAMAP-Rule" id="MF_01368"/>
    </source>
</evidence>
<evidence type="ECO:0000256" key="2">
    <source>
        <dbReference type="SAM" id="MobiDB-lite"/>
    </source>
</evidence>
<evidence type="ECO:0000305" key="3"/>
<accession>Q98N32</accession>
<gene>
    <name evidence="1" type="primary">rplQ</name>
    <name type="ordered locus">mlr0326</name>
</gene>
<reference key="1">
    <citation type="journal article" date="2000" name="DNA Res.">
        <title>Complete genome structure of the nitrogen-fixing symbiotic bacterium Mesorhizobium loti.</title>
        <authorList>
            <person name="Kaneko T."/>
            <person name="Nakamura Y."/>
            <person name="Sato S."/>
            <person name="Asamizu E."/>
            <person name="Kato T."/>
            <person name="Sasamoto S."/>
            <person name="Watanabe A."/>
            <person name="Idesawa K."/>
            <person name="Ishikawa A."/>
            <person name="Kawashima K."/>
            <person name="Kimura T."/>
            <person name="Kishida Y."/>
            <person name="Kiyokawa C."/>
            <person name="Kohara M."/>
            <person name="Matsumoto M."/>
            <person name="Matsuno A."/>
            <person name="Mochizuki Y."/>
            <person name="Nakayama S."/>
            <person name="Nakazaki N."/>
            <person name="Shimpo S."/>
            <person name="Sugimoto M."/>
            <person name="Takeuchi C."/>
            <person name="Yamada M."/>
            <person name="Tabata S."/>
        </authorList>
    </citation>
    <scope>NUCLEOTIDE SEQUENCE [LARGE SCALE GENOMIC DNA]</scope>
    <source>
        <strain>LMG 29417 / CECT 9101 / MAFF 303099</strain>
    </source>
</reference>
<dbReference type="EMBL" id="BA000012">
    <property type="protein sequence ID" value="BAB47931.1"/>
    <property type="molecule type" value="Genomic_DNA"/>
</dbReference>
<dbReference type="RefSeq" id="WP_010909289.1">
    <property type="nucleotide sequence ID" value="NC_002678.2"/>
</dbReference>
<dbReference type="SMR" id="Q98N32"/>
<dbReference type="GeneID" id="66684191"/>
<dbReference type="KEGG" id="mlo:mlr0326"/>
<dbReference type="eggNOG" id="COG0203">
    <property type="taxonomic scope" value="Bacteria"/>
</dbReference>
<dbReference type="HOGENOM" id="CLU_074407_2_0_5"/>
<dbReference type="Proteomes" id="UP000000552">
    <property type="component" value="Chromosome"/>
</dbReference>
<dbReference type="GO" id="GO:0022625">
    <property type="term" value="C:cytosolic large ribosomal subunit"/>
    <property type="evidence" value="ECO:0007669"/>
    <property type="project" value="TreeGrafter"/>
</dbReference>
<dbReference type="GO" id="GO:0003735">
    <property type="term" value="F:structural constituent of ribosome"/>
    <property type="evidence" value="ECO:0007669"/>
    <property type="project" value="InterPro"/>
</dbReference>
<dbReference type="GO" id="GO:0006412">
    <property type="term" value="P:translation"/>
    <property type="evidence" value="ECO:0007669"/>
    <property type="project" value="UniProtKB-UniRule"/>
</dbReference>
<dbReference type="FunFam" id="3.90.1030.10:FF:000001">
    <property type="entry name" value="50S ribosomal protein L17"/>
    <property type="match status" value="1"/>
</dbReference>
<dbReference type="Gene3D" id="3.90.1030.10">
    <property type="entry name" value="Ribosomal protein L17"/>
    <property type="match status" value="1"/>
</dbReference>
<dbReference type="HAMAP" id="MF_01368">
    <property type="entry name" value="Ribosomal_bL17"/>
    <property type="match status" value="1"/>
</dbReference>
<dbReference type="InterPro" id="IPR000456">
    <property type="entry name" value="Ribosomal_bL17"/>
</dbReference>
<dbReference type="InterPro" id="IPR047859">
    <property type="entry name" value="Ribosomal_bL17_CS"/>
</dbReference>
<dbReference type="InterPro" id="IPR036373">
    <property type="entry name" value="Ribosomal_bL17_sf"/>
</dbReference>
<dbReference type="NCBIfam" id="TIGR00059">
    <property type="entry name" value="L17"/>
    <property type="match status" value="1"/>
</dbReference>
<dbReference type="PANTHER" id="PTHR14413:SF16">
    <property type="entry name" value="LARGE RIBOSOMAL SUBUNIT PROTEIN BL17M"/>
    <property type="match status" value="1"/>
</dbReference>
<dbReference type="PANTHER" id="PTHR14413">
    <property type="entry name" value="RIBOSOMAL PROTEIN L17"/>
    <property type="match status" value="1"/>
</dbReference>
<dbReference type="Pfam" id="PF01196">
    <property type="entry name" value="Ribosomal_L17"/>
    <property type="match status" value="1"/>
</dbReference>
<dbReference type="SUPFAM" id="SSF64263">
    <property type="entry name" value="Prokaryotic ribosomal protein L17"/>
    <property type="match status" value="1"/>
</dbReference>
<dbReference type="PROSITE" id="PS01167">
    <property type="entry name" value="RIBOSOMAL_L17"/>
    <property type="match status" value="1"/>
</dbReference>
<proteinExistence type="inferred from homology"/>